<dbReference type="EMBL" id="CP000777">
    <property type="protein sequence ID" value="ABZ94418.1"/>
    <property type="molecule type" value="Genomic_DNA"/>
</dbReference>
<dbReference type="RefSeq" id="WP_002974412.1">
    <property type="nucleotide sequence ID" value="NC_010842.1"/>
</dbReference>
<dbReference type="SMR" id="B0SAF5"/>
<dbReference type="GeneID" id="93343078"/>
<dbReference type="KEGG" id="lbf:LBF_1914"/>
<dbReference type="HOGENOM" id="CLU_122625_1_3_12"/>
<dbReference type="GO" id="GO:1990904">
    <property type="term" value="C:ribonucleoprotein complex"/>
    <property type="evidence" value="ECO:0007669"/>
    <property type="project" value="UniProtKB-KW"/>
</dbReference>
<dbReference type="GO" id="GO:0005840">
    <property type="term" value="C:ribosome"/>
    <property type="evidence" value="ECO:0007669"/>
    <property type="project" value="UniProtKB-KW"/>
</dbReference>
<dbReference type="GO" id="GO:0003735">
    <property type="term" value="F:structural constituent of ribosome"/>
    <property type="evidence" value="ECO:0007669"/>
    <property type="project" value="InterPro"/>
</dbReference>
<dbReference type="GO" id="GO:0000049">
    <property type="term" value="F:tRNA binding"/>
    <property type="evidence" value="ECO:0007669"/>
    <property type="project" value="UniProtKB-UniRule"/>
</dbReference>
<dbReference type="GO" id="GO:0006412">
    <property type="term" value="P:translation"/>
    <property type="evidence" value="ECO:0007669"/>
    <property type="project" value="UniProtKB-UniRule"/>
</dbReference>
<dbReference type="FunFam" id="3.30.70.600:FF:000001">
    <property type="entry name" value="30S ribosomal protein S10"/>
    <property type="match status" value="1"/>
</dbReference>
<dbReference type="Gene3D" id="3.30.70.600">
    <property type="entry name" value="Ribosomal protein S10 domain"/>
    <property type="match status" value="1"/>
</dbReference>
<dbReference type="HAMAP" id="MF_00508">
    <property type="entry name" value="Ribosomal_uS10"/>
    <property type="match status" value="1"/>
</dbReference>
<dbReference type="InterPro" id="IPR001848">
    <property type="entry name" value="Ribosomal_uS10"/>
</dbReference>
<dbReference type="InterPro" id="IPR018268">
    <property type="entry name" value="Ribosomal_uS10_CS"/>
</dbReference>
<dbReference type="InterPro" id="IPR027486">
    <property type="entry name" value="Ribosomal_uS10_dom"/>
</dbReference>
<dbReference type="InterPro" id="IPR036838">
    <property type="entry name" value="Ribosomal_uS10_dom_sf"/>
</dbReference>
<dbReference type="NCBIfam" id="NF001861">
    <property type="entry name" value="PRK00596.1"/>
    <property type="match status" value="1"/>
</dbReference>
<dbReference type="NCBIfam" id="TIGR01049">
    <property type="entry name" value="rpsJ_bact"/>
    <property type="match status" value="1"/>
</dbReference>
<dbReference type="PANTHER" id="PTHR11700">
    <property type="entry name" value="30S RIBOSOMAL PROTEIN S10 FAMILY MEMBER"/>
    <property type="match status" value="1"/>
</dbReference>
<dbReference type="Pfam" id="PF00338">
    <property type="entry name" value="Ribosomal_S10"/>
    <property type="match status" value="1"/>
</dbReference>
<dbReference type="PRINTS" id="PR00971">
    <property type="entry name" value="RIBOSOMALS10"/>
</dbReference>
<dbReference type="SMART" id="SM01403">
    <property type="entry name" value="Ribosomal_S10"/>
    <property type="match status" value="1"/>
</dbReference>
<dbReference type="SUPFAM" id="SSF54999">
    <property type="entry name" value="Ribosomal protein S10"/>
    <property type="match status" value="1"/>
</dbReference>
<dbReference type="PROSITE" id="PS00361">
    <property type="entry name" value="RIBOSOMAL_S10"/>
    <property type="match status" value="1"/>
</dbReference>
<protein>
    <recommendedName>
        <fullName evidence="1">Small ribosomal subunit protein uS10</fullName>
    </recommendedName>
    <alternativeName>
        <fullName evidence="2">30S ribosomal protein S10</fullName>
    </alternativeName>
</protein>
<proteinExistence type="inferred from homology"/>
<gene>
    <name evidence="1" type="primary">rpsJ</name>
    <name type="ordered locus">LBF_1914</name>
</gene>
<accession>B0SAF5</accession>
<reference key="1">
    <citation type="journal article" date="2008" name="PLoS ONE">
        <title>Genome sequence of the saprophyte Leptospira biflexa provides insights into the evolution of Leptospira and the pathogenesis of leptospirosis.</title>
        <authorList>
            <person name="Picardeau M."/>
            <person name="Bulach D.M."/>
            <person name="Bouchier C."/>
            <person name="Zuerner R.L."/>
            <person name="Zidane N."/>
            <person name="Wilson P.J."/>
            <person name="Creno S."/>
            <person name="Kuczek E.S."/>
            <person name="Bommezzadri S."/>
            <person name="Davis J.C."/>
            <person name="McGrath A."/>
            <person name="Johnson M.J."/>
            <person name="Boursaux-Eude C."/>
            <person name="Seemann T."/>
            <person name="Rouy Z."/>
            <person name="Coppel R.L."/>
            <person name="Rood J.I."/>
            <person name="Lajus A."/>
            <person name="Davies J.K."/>
            <person name="Medigue C."/>
            <person name="Adler B."/>
        </authorList>
    </citation>
    <scope>NUCLEOTIDE SEQUENCE [LARGE SCALE GENOMIC DNA]</scope>
    <source>
        <strain>Patoc 1 / Ames</strain>
    </source>
</reference>
<organism>
    <name type="scientific">Leptospira biflexa serovar Patoc (strain Patoc 1 / Ames)</name>
    <dbReference type="NCBI Taxonomy" id="355278"/>
    <lineage>
        <taxon>Bacteria</taxon>
        <taxon>Pseudomonadati</taxon>
        <taxon>Spirochaetota</taxon>
        <taxon>Spirochaetia</taxon>
        <taxon>Leptospirales</taxon>
        <taxon>Leptospiraceae</taxon>
        <taxon>Leptospira</taxon>
    </lineage>
</organism>
<feature type="chain" id="PRO_1000127144" description="Small ribosomal subunit protein uS10">
    <location>
        <begin position="1"/>
        <end position="102"/>
    </location>
</feature>
<comment type="function">
    <text evidence="1">Involved in the binding of tRNA to the ribosomes.</text>
</comment>
<comment type="subunit">
    <text evidence="1">Part of the 30S ribosomal subunit.</text>
</comment>
<comment type="similarity">
    <text evidence="1">Belongs to the universal ribosomal protein uS10 family.</text>
</comment>
<keyword id="KW-0687">Ribonucleoprotein</keyword>
<keyword id="KW-0689">Ribosomal protein</keyword>
<sequence length="102" mass="11508">MAGQRIRVKLKAFDHRLIDQSTFEIVATAKRTGATVSGPIPLPTKKEIYTVLRSPHVNKKAREQFEMRTHKRLIDILNTNEDTVEALMKLQLPAGVSVDIKS</sequence>
<evidence type="ECO:0000255" key="1">
    <source>
        <dbReference type="HAMAP-Rule" id="MF_00508"/>
    </source>
</evidence>
<evidence type="ECO:0000305" key="2"/>
<name>RS10_LEPBA</name>